<comment type="function">
    <text evidence="4">A cytochrome P450 monooxygenase involved in the biosynthesis of akuammilan monoterpene indole alkaloids (MIAs) natural products, components with various biological properties such as antidiabetic, antibacterial, anti-inflammatory, anticancer, and antimalarial activities (PubMed:36349266). Catalyzes the conversion of geissoschizine to rhazimal (PubMed:36349266). Can also, with lower efficiency, support the conversion of geissoschizine to akuammicine (PubMed:36349266).</text>
</comment>
<comment type="catalytic activity">
    <reaction evidence="4">
        <text>(19E)-geissoschizine + reduced [NADPH--hemoprotein reductase] + O2 = rhazimal + oxidized [NADPH--hemoprotein reductase] + 2 H2O + H(+)</text>
        <dbReference type="Rhea" id="RHEA:79619"/>
        <dbReference type="Rhea" id="RHEA-COMP:11964"/>
        <dbReference type="Rhea" id="RHEA-COMP:11965"/>
        <dbReference type="ChEBI" id="CHEBI:15377"/>
        <dbReference type="ChEBI" id="CHEBI:15378"/>
        <dbReference type="ChEBI" id="CHEBI:15379"/>
        <dbReference type="ChEBI" id="CHEBI:17037"/>
        <dbReference type="ChEBI" id="CHEBI:57618"/>
        <dbReference type="ChEBI" id="CHEBI:58210"/>
        <dbReference type="ChEBI" id="CHEBI:230473"/>
        <dbReference type="EC" id="1.14.14.187"/>
    </reaction>
    <physiologicalReaction direction="left-to-right" evidence="4">
        <dbReference type="Rhea" id="RHEA:79620"/>
    </physiologicalReaction>
</comment>
<comment type="catalytic activity">
    <reaction evidence="4">
        <text>(19E)-geissoschizine + reduced [NADPH--hemoprotein reductase] + O2 = akuammicine + formate + oxidized [NADPH--hemoprotein reductase] + H2O + H(+)</text>
        <dbReference type="Rhea" id="RHEA:58520"/>
        <dbReference type="Rhea" id="RHEA-COMP:11964"/>
        <dbReference type="Rhea" id="RHEA-COMP:11965"/>
        <dbReference type="ChEBI" id="CHEBI:15377"/>
        <dbReference type="ChEBI" id="CHEBI:15378"/>
        <dbReference type="ChEBI" id="CHEBI:15379"/>
        <dbReference type="ChEBI" id="CHEBI:15740"/>
        <dbReference type="ChEBI" id="CHEBI:17037"/>
        <dbReference type="ChEBI" id="CHEBI:57618"/>
        <dbReference type="ChEBI" id="CHEBI:58210"/>
        <dbReference type="ChEBI" id="CHEBI:142754"/>
        <dbReference type="EC" id="1.14.19.80"/>
    </reaction>
    <physiologicalReaction direction="left-to-right" evidence="4">
        <dbReference type="Rhea" id="RHEA:58521"/>
    </physiologicalReaction>
</comment>
<comment type="cofactor">
    <cofactor evidence="1">
        <name>heme</name>
        <dbReference type="ChEBI" id="CHEBI:30413"/>
    </cofactor>
</comment>
<comment type="biophysicochemical properties">
    <kinetics>
        <KM evidence="4">9.25 uM for geissoschizine</KM>
    </kinetics>
    <phDependence>
        <text evidence="4">Optimum pH is 7-8.</text>
    </phDependence>
    <temperatureDependence>
        <text evidence="4">Optimum temperature is 32-37 degrees Celsius.</text>
    </temperatureDependence>
</comment>
<comment type="pathway">
    <text evidence="4">Alkaloid biosynthesis.</text>
</comment>
<comment type="subcellular location">
    <subcellularLocation>
        <location evidence="2">Membrane</location>
        <topology evidence="2">Single-pass membrane protein</topology>
    </subcellularLocation>
</comment>
<comment type="similarity">
    <text evidence="6">Belongs to the cytochrome P450 family.</text>
</comment>
<feature type="chain" id="PRO_0000462243" description="Rhazimal synthase">
    <location>
        <begin position="1"/>
        <end position="501"/>
    </location>
</feature>
<feature type="transmembrane region" description="Helical" evidence="2">
    <location>
        <begin position="4"/>
        <end position="24"/>
    </location>
</feature>
<feature type="binding site" description="axial binding residue" evidence="1">
    <location>
        <position position="442"/>
    </location>
    <ligand>
        <name>heme</name>
        <dbReference type="ChEBI" id="CHEBI:30413"/>
    </ligand>
    <ligandPart>
        <name>Fe</name>
        <dbReference type="ChEBI" id="CHEBI:18248"/>
    </ligandPart>
</feature>
<feature type="glycosylation site" description="N-linked (GlcNAc...) asparagine" evidence="3">
    <location>
        <position position="282"/>
    </location>
</feature>
<feature type="mutagenesis site" description="Reduced activity." evidence="4">
    <original>V</original>
    <variation>I</variation>
    <location>
        <position position="112"/>
    </location>
</feature>
<feature type="mutagenesis site" description="Reduced activity." evidence="4">
    <original>C</original>
    <variation>V</variation>
    <location>
        <position position="205"/>
    </location>
</feature>
<feature type="mutagenesis site" description="Strongly reduced activity." evidence="4">
    <original>V</original>
    <variation>T</variation>
    <location>
        <position position="208"/>
    </location>
</feature>
<feature type="mutagenesis site" description="Reduced activity." evidence="4">
    <original>S</original>
    <variation>A</variation>
    <location>
        <position position="212"/>
    </location>
</feature>
<feature type="mutagenesis site" description="Strongly reduced activity." evidence="4">
    <original>F</original>
    <variation>A</variation>
    <variation>V</variation>
    <variation>Y</variation>
    <location>
        <position position="372"/>
    </location>
</feature>
<feature type="mutagenesis site" description="Reduced activity." evidence="4">
    <original>F</original>
    <variation>L</variation>
    <variation>W</variation>
    <location>
        <position position="372"/>
    </location>
</feature>
<accession>A0A9E7S4M3</accession>
<sequence length="501" mass="57128">MEMMQLSFASAVVYSLIFFVFLLVKQLLKPKSHKKLPPGPWTLPIIGNLHQILGALPHRIFKDLSDKYGPLMRIMMGERTTIIVSSATMAKVVLHTHGLAVANRPINSVAKVICYNNLGVTFAEYGEYLKQLRQLYMLELLSPKRVQSFSAVFEDELQTFVKSIKSEVGQPMIIYEKSVTYLYSTICRVMLGNVCNEREKLIKICKKVSFYSAAPIRIEDLFPSMKFIISRIFSTNSILKDLLKDLDDVLDIVIAERENSQYAQEEEDMLGILLKHKRSDGNNSKLKITNKDIKAIIFELLLAATLSVADVVEWAMVEILRHPKVLKQVHDEVRQAFKGQKTITGSDLGKLEYLHMCFKESTRLHPAAPLLFPREAREEFEIDGYTIPKGSWVLTNYWAVGRDPRIWPKPDEFDPERFRNSDIEFYGNHFELIPFGTGRRGCPGILFGITEALYLLAALFYHFDWKLAGGITPEEIDMTEVFGAGCILKNPLNLIPRLAEN</sequence>
<reference evidence="7" key="1">
    <citation type="journal article" date="2022" name="Chem. Sci.">
        <title>Deciphering and reprogramming the cyclization regioselectivity in bifurcation of indole alkaloid biosynthesis.</title>
        <authorList>
            <person name="Wang Z."/>
            <person name="Xiao Y."/>
            <person name="Wu S."/>
            <person name="Chen J."/>
            <person name="Li A."/>
            <person name="Tatsis E.C."/>
        </authorList>
    </citation>
    <scope>NUCLEOTIDE SEQUENCE [MRNA]</scope>
    <scope>FUNCTION</scope>
    <scope>MUTAGENESIS OF VAL-112; CYS-205; VAL-208; SER-212 AND PHE-372</scope>
    <scope>CATALYTIC ACTIVITY</scope>
    <scope>PATHWAY</scope>
    <scope>BIOPHYSICOCHEMICAL PROPERTIES</scope>
</reference>
<gene>
    <name evidence="5" type="primary">RHS</name>
</gene>
<keyword id="KW-0017">Alkaloid metabolism</keyword>
<keyword id="KW-0325">Glycoprotein</keyword>
<keyword id="KW-0349">Heme</keyword>
<keyword id="KW-0408">Iron</keyword>
<keyword id="KW-0472">Membrane</keyword>
<keyword id="KW-0479">Metal-binding</keyword>
<keyword id="KW-0503">Monooxygenase</keyword>
<keyword id="KW-0560">Oxidoreductase</keyword>
<keyword id="KW-0812">Transmembrane</keyword>
<keyword id="KW-1133">Transmembrane helix</keyword>
<dbReference type="EC" id="1.14.14.187" evidence="4"/>
<dbReference type="EC" id="1.14.19.80" evidence="4"/>
<dbReference type="EMBL" id="OM323329">
    <property type="protein sequence ID" value="URS65384.1"/>
    <property type="molecule type" value="mRNA"/>
</dbReference>
<dbReference type="SMR" id="A0A9E7S4M3"/>
<dbReference type="KEGG" id="ag:URS65384"/>
<dbReference type="GO" id="GO:0016020">
    <property type="term" value="C:membrane"/>
    <property type="evidence" value="ECO:0007669"/>
    <property type="project" value="UniProtKB-KW"/>
</dbReference>
<dbReference type="GO" id="GO:0020037">
    <property type="term" value="F:heme binding"/>
    <property type="evidence" value="ECO:0007669"/>
    <property type="project" value="InterPro"/>
</dbReference>
<dbReference type="GO" id="GO:0005506">
    <property type="term" value="F:iron ion binding"/>
    <property type="evidence" value="ECO:0007669"/>
    <property type="project" value="InterPro"/>
</dbReference>
<dbReference type="GO" id="GO:0004497">
    <property type="term" value="F:monooxygenase activity"/>
    <property type="evidence" value="ECO:0000314"/>
    <property type="project" value="UniProtKB"/>
</dbReference>
<dbReference type="GO" id="GO:0016705">
    <property type="term" value="F:oxidoreductase activity, acting on paired donors, with incorporation or reduction of molecular oxygen"/>
    <property type="evidence" value="ECO:0007669"/>
    <property type="project" value="InterPro"/>
</dbReference>
<dbReference type="GO" id="GO:0035835">
    <property type="term" value="P:indole alkaloid biosynthetic process"/>
    <property type="evidence" value="ECO:0000314"/>
    <property type="project" value="UniProtKB"/>
</dbReference>
<dbReference type="CDD" id="cd11072">
    <property type="entry name" value="CYP71-like"/>
    <property type="match status" value="1"/>
</dbReference>
<dbReference type="FunFam" id="1.10.630.10:FF:000097">
    <property type="entry name" value="Cytochrome P-450 19"/>
    <property type="match status" value="1"/>
</dbReference>
<dbReference type="Gene3D" id="1.10.630.10">
    <property type="entry name" value="Cytochrome P450"/>
    <property type="match status" value="1"/>
</dbReference>
<dbReference type="InterPro" id="IPR001128">
    <property type="entry name" value="Cyt_P450"/>
</dbReference>
<dbReference type="InterPro" id="IPR017972">
    <property type="entry name" value="Cyt_P450_CS"/>
</dbReference>
<dbReference type="InterPro" id="IPR002401">
    <property type="entry name" value="Cyt_P450_E_grp-I"/>
</dbReference>
<dbReference type="InterPro" id="IPR036396">
    <property type="entry name" value="Cyt_P450_sf"/>
</dbReference>
<dbReference type="PANTHER" id="PTHR47955:SF8">
    <property type="entry name" value="CYTOCHROME P450 71D11-LIKE"/>
    <property type="match status" value="1"/>
</dbReference>
<dbReference type="PANTHER" id="PTHR47955">
    <property type="entry name" value="CYTOCHROME P450 FAMILY 71 PROTEIN"/>
    <property type="match status" value="1"/>
</dbReference>
<dbReference type="Pfam" id="PF00067">
    <property type="entry name" value="p450"/>
    <property type="match status" value="1"/>
</dbReference>
<dbReference type="PRINTS" id="PR00463">
    <property type="entry name" value="EP450I"/>
</dbReference>
<dbReference type="SUPFAM" id="SSF48264">
    <property type="entry name" value="Cytochrome P450"/>
    <property type="match status" value="1"/>
</dbReference>
<dbReference type="PROSITE" id="PS00086">
    <property type="entry name" value="CYTOCHROME_P450"/>
    <property type="match status" value="1"/>
</dbReference>
<protein>
    <recommendedName>
        <fullName evidence="5">Rhazimal synthase</fullName>
        <shortName evidence="5">AsRHS</shortName>
        <ecNumber evidence="4">1.14.14.187</ecNumber>
    </recommendedName>
    <alternativeName>
        <fullName evidence="5">Cytochrome P450 RHS</fullName>
    </alternativeName>
    <alternativeName>
        <fullName evidence="5">Geissoschizine oxidase RHS</fullName>
        <ecNumber evidence="4">1.14.19.80</ecNumber>
    </alternativeName>
</protein>
<organism>
    <name type="scientific">Alstonia scholaris</name>
    <name type="common">Dogbane</name>
    <name type="synonym">Echites scholaris</name>
    <dbReference type="NCBI Taxonomy" id="52822"/>
    <lineage>
        <taxon>Eukaryota</taxon>
        <taxon>Viridiplantae</taxon>
        <taxon>Streptophyta</taxon>
        <taxon>Embryophyta</taxon>
        <taxon>Tracheophyta</taxon>
        <taxon>Spermatophyta</taxon>
        <taxon>Magnoliopsida</taxon>
        <taxon>eudicotyledons</taxon>
        <taxon>Gunneridae</taxon>
        <taxon>Pentapetalae</taxon>
        <taxon>asterids</taxon>
        <taxon>lamiids</taxon>
        <taxon>Gentianales</taxon>
        <taxon>Apocynaceae</taxon>
        <taxon>Rauvolfioideae</taxon>
        <taxon>Alstonieae</taxon>
        <taxon>Alstonia</taxon>
    </lineage>
</organism>
<proteinExistence type="evidence at protein level"/>
<evidence type="ECO:0000250" key="1">
    <source>
        <dbReference type="UniProtKB" id="P04798"/>
    </source>
</evidence>
<evidence type="ECO:0000255" key="2"/>
<evidence type="ECO:0000255" key="3">
    <source>
        <dbReference type="PROSITE-ProRule" id="PRU00498"/>
    </source>
</evidence>
<evidence type="ECO:0000269" key="4">
    <source>
    </source>
</evidence>
<evidence type="ECO:0000303" key="5">
    <source>
    </source>
</evidence>
<evidence type="ECO:0000305" key="6"/>
<evidence type="ECO:0000312" key="7">
    <source>
        <dbReference type="EMBL" id="URS65384.1"/>
    </source>
</evidence>
<name>RHS_ALSSC</name>